<accession>Q7MNF4</accession>
<reference key="1">
    <citation type="journal article" date="2003" name="Genome Res.">
        <title>Comparative genome analysis of Vibrio vulnificus, a marine pathogen.</title>
        <authorList>
            <person name="Chen C.-Y."/>
            <person name="Wu K.-M."/>
            <person name="Chang Y.-C."/>
            <person name="Chang C.-H."/>
            <person name="Tsai H.-C."/>
            <person name="Liao T.-L."/>
            <person name="Liu Y.-M."/>
            <person name="Chen H.-J."/>
            <person name="Shen A.B.-T."/>
            <person name="Li J.-C."/>
            <person name="Su T.-L."/>
            <person name="Shao C.-P."/>
            <person name="Lee C.-T."/>
            <person name="Hor L.-I."/>
            <person name="Tsai S.-F."/>
        </authorList>
    </citation>
    <scope>NUCLEOTIDE SEQUENCE [LARGE SCALE GENOMIC DNA]</scope>
    <source>
        <strain>YJ016</strain>
    </source>
</reference>
<gene>
    <name evidence="1" type="primary">ndk</name>
    <name type="ordered locus">VV0763</name>
</gene>
<proteinExistence type="inferred from homology"/>
<feature type="chain" id="PRO_0000137074" description="Nucleoside diphosphate kinase">
    <location>
        <begin position="1"/>
        <end position="141"/>
    </location>
</feature>
<feature type="active site" description="Pros-phosphohistidine intermediate" evidence="1">
    <location>
        <position position="117"/>
    </location>
</feature>
<feature type="binding site" evidence="1">
    <location>
        <position position="11"/>
    </location>
    <ligand>
        <name>ATP</name>
        <dbReference type="ChEBI" id="CHEBI:30616"/>
    </ligand>
</feature>
<feature type="binding site" evidence="1">
    <location>
        <position position="59"/>
    </location>
    <ligand>
        <name>ATP</name>
        <dbReference type="ChEBI" id="CHEBI:30616"/>
    </ligand>
</feature>
<feature type="binding site" evidence="1">
    <location>
        <position position="87"/>
    </location>
    <ligand>
        <name>ATP</name>
        <dbReference type="ChEBI" id="CHEBI:30616"/>
    </ligand>
</feature>
<feature type="binding site" evidence="1">
    <location>
        <position position="93"/>
    </location>
    <ligand>
        <name>ATP</name>
        <dbReference type="ChEBI" id="CHEBI:30616"/>
    </ligand>
</feature>
<feature type="binding site" evidence="1">
    <location>
        <position position="104"/>
    </location>
    <ligand>
        <name>ATP</name>
        <dbReference type="ChEBI" id="CHEBI:30616"/>
    </ligand>
</feature>
<feature type="binding site" evidence="1">
    <location>
        <position position="114"/>
    </location>
    <ligand>
        <name>ATP</name>
        <dbReference type="ChEBI" id="CHEBI:30616"/>
    </ligand>
</feature>
<keyword id="KW-0067">ATP-binding</keyword>
<keyword id="KW-0963">Cytoplasm</keyword>
<keyword id="KW-0418">Kinase</keyword>
<keyword id="KW-0460">Magnesium</keyword>
<keyword id="KW-0479">Metal-binding</keyword>
<keyword id="KW-0546">Nucleotide metabolism</keyword>
<keyword id="KW-0547">Nucleotide-binding</keyword>
<keyword id="KW-0597">Phosphoprotein</keyword>
<keyword id="KW-0808">Transferase</keyword>
<sequence length="141" mass="15760">MALERTFSIIKPDAVERNLIGEIYHRIEKAGLRIIAAKMVHLNDEQASGFYAEHEGKEFFPALKEFMTSGPIMVQVLEGENAIARYRELMGKTNPEEAACGTIRADYALSMRHNSVHGSDSPASAAREIAFFFPESEICPR</sequence>
<dbReference type="EC" id="2.7.4.6" evidence="1"/>
<dbReference type="EMBL" id="BA000037">
    <property type="protein sequence ID" value="BAC93527.1"/>
    <property type="molecule type" value="Genomic_DNA"/>
</dbReference>
<dbReference type="RefSeq" id="WP_011078529.1">
    <property type="nucleotide sequence ID" value="NC_005139.1"/>
</dbReference>
<dbReference type="SMR" id="Q7MNF4"/>
<dbReference type="STRING" id="672.VV93_v1c07090"/>
<dbReference type="KEGG" id="vvy:VV0763"/>
<dbReference type="eggNOG" id="COG0105">
    <property type="taxonomic scope" value="Bacteria"/>
</dbReference>
<dbReference type="HOGENOM" id="CLU_060216_8_1_6"/>
<dbReference type="Proteomes" id="UP000002675">
    <property type="component" value="Chromosome I"/>
</dbReference>
<dbReference type="GO" id="GO:0005737">
    <property type="term" value="C:cytoplasm"/>
    <property type="evidence" value="ECO:0007669"/>
    <property type="project" value="UniProtKB-SubCell"/>
</dbReference>
<dbReference type="GO" id="GO:0005524">
    <property type="term" value="F:ATP binding"/>
    <property type="evidence" value="ECO:0007669"/>
    <property type="project" value="UniProtKB-UniRule"/>
</dbReference>
<dbReference type="GO" id="GO:0046872">
    <property type="term" value="F:metal ion binding"/>
    <property type="evidence" value="ECO:0007669"/>
    <property type="project" value="UniProtKB-KW"/>
</dbReference>
<dbReference type="GO" id="GO:0004550">
    <property type="term" value="F:nucleoside diphosphate kinase activity"/>
    <property type="evidence" value="ECO:0007669"/>
    <property type="project" value="UniProtKB-UniRule"/>
</dbReference>
<dbReference type="GO" id="GO:0006241">
    <property type="term" value="P:CTP biosynthetic process"/>
    <property type="evidence" value="ECO:0007669"/>
    <property type="project" value="UniProtKB-UniRule"/>
</dbReference>
<dbReference type="GO" id="GO:0006183">
    <property type="term" value="P:GTP biosynthetic process"/>
    <property type="evidence" value="ECO:0007669"/>
    <property type="project" value="UniProtKB-UniRule"/>
</dbReference>
<dbReference type="GO" id="GO:0006228">
    <property type="term" value="P:UTP biosynthetic process"/>
    <property type="evidence" value="ECO:0007669"/>
    <property type="project" value="UniProtKB-UniRule"/>
</dbReference>
<dbReference type="CDD" id="cd04413">
    <property type="entry name" value="NDPk_I"/>
    <property type="match status" value="1"/>
</dbReference>
<dbReference type="FunFam" id="3.30.70.141:FF:000001">
    <property type="entry name" value="Nucleoside diphosphate kinase"/>
    <property type="match status" value="1"/>
</dbReference>
<dbReference type="Gene3D" id="3.30.70.141">
    <property type="entry name" value="Nucleoside diphosphate kinase-like domain"/>
    <property type="match status" value="1"/>
</dbReference>
<dbReference type="HAMAP" id="MF_00451">
    <property type="entry name" value="NDP_kinase"/>
    <property type="match status" value="1"/>
</dbReference>
<dbReference type="InterPro" id="IPR034907">
    <property type="entry name" value="NDK-like_dom"/>
</dbReference>
<dbReference type="InterPro" id="IPR036850">
    <property type="entry name" value="NDK-like_dom_sf"/>
</dbReference>
<dbReference type="InterPro" id="IPR001564">
    <property type="entry name" value="Nucleoside_diP_kinase"/>
</dbReference>
<dbReference type="InterPro" id="IPR023005">
    <property type="entry name" value="Nucleoside_diP_kinase_AS"/>
</dbReference>
<dbReference type="NCBIfam" id="NF001908">
    <property type="entry name" value="PRK00668.1"/>
    <property type="match status" value="1"/>
</dbReference>
<dbReference type="PANTHER" id="PTHR46161">
    <property type="entry name" value="NUCLEOSIDE DIPHOSPHATE KINASE"/>
    <property type="match status" value="1"/>
</dbReference>
<dbReference type="PANTHER" id="PTHR46161:SF3">
    <property type="entry name" value="NUCLEOSIDE DIPHOSPHATE KINASE DDB_G0292928-RELATED"/>
    <property type="match status" value="1"/>
</dbReference>
<dbReference type="Pfam" id="PF00334">
    <property type="entry name" value="NDK"/>
    <property type="match status" value="1"/>
</dbReference>
<dbReference type="PRINTS" id="PR01243">
    <property type="entry name" value="NUCDPKINASE"/>
</dbReference>
<dbReference type="SMART" id="SM00562">
    <property type="entry name" value="NDK"/>
    <property type="match status" value="1"/>
</dbReference>
<dbReference type="SUPFAM" id="SSF54919">
    <property type="entry name" value="Nucleoside diphosphate kinase, NDK"/>
    <property type="match status" value="1"/>
</dbReference>
<dbReference type="PROSITE" id="PS00469">
    <property type="entry name" value="NDPK"/>
    <property type="match status" value="1"/>
</dbReference>
<dbReference type="PROSITE" id="PS51374">
    <property type="entry name" value="NDPK_LIKE"/>
    <property type="match status" value="1"/>
</dbReference>
<organism>
    <name type="scientific">Vibrio vulnificus (strain YJ016)</name>
    <dbReference type="NCBI Taxonomy" id="196600"/>
    <lineage>
        <taxon>Bacteria</taxon>
        <taxon>Pseudomonadati</taxon>
        <taxon>Pseudomonadota</taxon>
        <taxon>Gammaproteobacteria</taxon>
        <taxon>Vibrionales</taxon>
        <taxon>Vibrionaceae</taxon>
        <taxon>Vibrio</taxon>
    </lineage>
</organism>
<comment type="function">
    <text evidence="1">Major role in the synthesis of nucleoside triphosphates other than ATP. The ATP gamma phosphate is transferred to the NDP beta phosphate via a ping-pong mechanism, using a phosphorylated active-site intermediate.</text>
</comment>
<comment type="catalytic activity">
    <reaction evidence="1">
        <text>a 2'-deoxyribonucleoside 5'-diphosphate + ATP = a 2'-deoxyribonucleoside 5'-triphosphate + ADP</text>
        <dbReference type="Rhea" id="RHEA:44640"/>
        <dbReference type="ChEBI" id="CHEBI:30616"/>
        <dbReference type="ChEBI" id="CHEBI:61560"/>
        <dbReference type="ChEBI" id="CHEBI:73316"/>
        <dbReference type="ChEBI" id="CHEBI:456216"/>
        <dbReference type="EC" id="2.7.4.6"/>
    </reaction>
</comment>
<comment type="catalytic activity">
    <reaction evidence="1">
        <text>a ribonucleoside 5'-diphosphate + ATP = a ribonucleoside 5'-triphosphate + ADP</text>
        <dbReference type="Rhea" id="RHEA:18113"/>
        <dbReference type="ChEBI" id="CHEBI:30616"/>
        <dbReference type="ChEBI" id="CHEBI:57930"/>
        <dbReference type="ChEBI" id="CHEBI:61557"/>
        <dbReference type="ChEBI" id="CHEBI:456216"/>
        <dbReference type="EC" id="2.7.4.6"/>
    </reaction>
</comment>
<comment type="cofactor">
    <cofactor evidence="1">
        <name>Mg(2+)</name>
        <dbReference type="ChEBI" id="CHEBI:18420"/>
    </cofactor>
</comment>
<comment type="subunit">
    <text evidence="1">Homotetramer.</text>
</comment>
<comment type="subcellular location">
    <subcellularLocation>
        <location evidence="1">Cytoplasm</location>
    </subcellularLocation>
</comment>
<comment type="similarity">
    <text evidence="1">Belongs to the NDK family.</text>
</comment>
<name>NDK_VIBVY</name>
<protein>
    <recommendedName>
        <fullName evidence="1">Nucleoside diphosphate kinase</fullName>
        <shortName evidence="1">NDK</shortName>
        <shortName evidence="1">NDP kinase</shortName>
        <ecNumber evidence="1">2.7.4.6</ecNumber>
    </recommendedName>
    <alternativeName>
        <fullName evidence="1">Nucleoside-2-P kinase</fullName>
    </alternativeName>
</protein>
<evidence type="ECO:0000255" key="1">
    <source>
        <dbReference type="HAMAP-Rule" id="MF_00451"/>
    </source>
</evidence>